<gene>
    <name evidence="1" type="primary">rimO</name>
    <name type="ordered locus">P9215_01181</name>
</gene>
<dbReference type="EC" id="2.8.4.4" evidence="1"/>
<dbReference type="EMBL" id="CP000825">
    <property type="protein sequence ID" value="ABV49737.1"/>
    <property type="molecule type" value="Genomic_DNA"/>
</dbReference>
<dbReference type="RefSeq" id="WP_012006917.1">
    <property type="nucleotide sequence ID" value="NC_009840.1"/>
</dbReference>
<dbReference type="SMR" id="A8G2A6"/>
<dbReference type="STRING" id="93060.P9215_01181"/>
<dbReference type="KEGG" id="pmh:P9215_01181"/>
<dbReference type="eggNOG" id="COG0621">
    <property type="taxonomic scope" value="Bacteria"/>
</dbReference>
<dbReference type="HOGENOM" id="CLU_018697_0_0_3"/>
<dbReference type="OrthoDB" id="9805215at2"/>
<dbReference type="Proteomes" id="UP000002014">
    <property type="component" value="Chromosome"/>
</dbReference>
<dbReference type="GO" id="GO:0005829">
    <property type="term" value="C:cytosol"/>
    <property type="evidence" value="ECO:0007669"/>
    <property type="project" value="TreeGrafter"/>
</dbReference>
<dbReference type="GO" id="GO:0051539">
    <property type="term" value="F:4 iron, 4 sulfur cluster binding"/>
    <property type="evidence" value="ECO:0007669"/>
    <property type="project" value="UniProtKB-UniRule"/>
</dbReference>
<dbReference type="GO" id="GO:0035599">
    <property type="term" value="F:aspartic acid methylthiotransferase activity"/>
    <property type="evidence" value="ECO:0007669"/>
    <property type="project" value="TreeGrafter"/>
</dbReference>
<dbReference type="GO" id="GO:0046872">
    <property type="term" value="F:metal ion binding"/>
    <property type="evidence" value="ECO:0007669"/>
    <property type="project" value="UniProtKB-KW"/>
</dbReference>
<dbReference type="GO" id="GO:0103039">
    <property type="term" value="F:protein methylthiotransferase activity"/>
    <property type="evidence" value="ECO:0007669"/>
    <property type="project" value="UniProtKB-EC"/>
</dbReference>
<dbReference type="GO" id="GO:0006400">
    <property type="term" value="P:tRNA modification"/>
    <property type="evidence" value="ECO:0007669"/>
    <property type="project" value="InterPro"/>
</dbReference>
<dbReference type="CDD" id="cd01335">
    <property type="entry name" value="Radical_SAM"/>
    <property type="match status" value="1"/>
</dbReference>
<dbReference type="FunFam" id="3.40.50.12160:FF:000003">
    <property type="entry name" value="CDK5 regulatory subunit-associated protein 1"/>
    <property type="match status" value="1"/>
</dbReference>
<dbReference type="FunFam" id="3.80.30.20:FF:000001">
    <property type="entry name" value="tRNA-2-methylthio-N(6)-dimethylallyladenosine synthase 2"/>
    <property type="match status" value="1"/>
</dbReference>
<dbReference type="Gene3D" id="3.40.50.12160">
    <property type="entry name" value="Methylthiotransferase, N-terminal domain"/>
    <property type="match status" value="1"/>
</dbReference>
<dbReference type="Gene3D" id="2.40.50.140">
    <property type="entry name" value="Nucleic acid-binding proteins"/>
    <property type="match status" value="1"/>
</dbReference>
<dbReference type="Gene3D" id="3.80.30.20">
    <property type="entry name" value="tm_1862 like domain"/>
    <property type="match status" value="1"/>
</dbReference>
<dbReference type="HAMAP" id="MF_01865">
    <property type="entry name" value="MTTase_RimO"/>
    <property type="match status" value="1"/>
</dbReference>
<dbReference type="InterPro" id="IPR006638">
    <property type="entry name" value="Elp3/MiaA/NifB-like_rSAM"/>
</dbReference>
<dbReference type="InterPro" id="IPR005839">
    <property type="entry name" value="Methylthiotransferase"/>
</dbReference>
<dbReference type="InterPro" id="IPR020612">
    <property type="entry name" value="Methylthiotransferase_CS"/>
</dbReference>
<dbReference type="InterPro" id="IPR013848">
    <property type="entry name" value="Methylthiotransferase_N"/>
</dbReference>
<dbReference type="InterPro" id="IPR038135">
    <property type="entry name" value="Methylthiotransferase_N_sf"/>
</dbReference>
<dbReference type="InterPro" id="IPR012340">
    <property type="entry name" value="NA-bd_OB-fold"/>
</dbReference>
<dbReference type="InterPro" id="IPR005840">
    <property type="entry name" value="Ribosomal_uS12_MeSTrfase_RimO"/>
</dbReference>
<dbReference type="InterPro" id="IPR007197">
    <property type="entry name" value="rSAM"/>
</dbReference>
<dbReference type="InterPro" id="IPR023404">
    <property type="entry name" value="rSAM_horseshoe"/>
</dbReference>
<dbReference type="InterPro" id="IPR002792">
    <property type="entry name" value="TRAM_dom"/>
</dbReference>
<dbReference type="NCBIfam" id="TIGR01125">
    <property type="entry name" value="30S ribosomal protein S12 methylthiotransferase RimO"/>
    <property type="match status" value="1"/>
</dbReference>
<dbReference type="NCBIfam" id="TIGR00089">
    <property type="entry name" value="MiaB/RimO family radical SAM methylthiotransferase"/>
    <property type="match status" value="1"/>
</dbReference>
<dbReference type="PANTHER" id="PTHR43837">
    <property type="entry name" value="RIBOSOMAL PROTEIN S12 METHYLTHIOTRANSFERASE RIMO"/>
    <property type="match status" value="1"/>
</dbReference>
<dbReference type="PANTHER" id="PTHR43837:SF1">
    <property type="entry name" value="RIBOSOMAL PROTEIN US12 METHYLTHIOTRANSFERASE RIMO"/>
    <property type="match status" value="1"/>
</dbReference>
<dbReference type="Pfam" id="PF04055">
    <property type="entry name" value="Radical_SAM"/>
    <property type="match status" value="1"/>
</dbReference>
<dbReference type="Pfam" id="PF18693">
    <property type="entry name" value="TRAM_2"/>
    <property type="match status" value="1"/>
</dbReference>
<dbReference type="Pfam" id="PF00919">
    <property type="entry name" value="UPF0004"/>
    <property type="match status" value="1"/>
</dbReference>
<dbReference type="SFLD" id="SFLDG01082">
    <property type="entry name" value="B12-binding_domain_containing"/>
    <property type="match status" value="1"/>
</dbReference>
<dbReference type="SFLD" id="SFLDG01061">
    <property type="entry name" value="methylthiotransferase"/>
    <property type="match status" value="1"/>
</dbReference>
<dbReference type="SFLD" id="SFLDF00274">
    <property type="entry name" value="ribosomal_protein_S12_methylth"/>
    <property type="match status" value="1"/>
</dbReference>
<dbReference type="SMART" id="SM00729">
    <property type="entry name" value="Elp3"/>
    <property type="match status" value="1"/>
</dbReference>
<dbReference type="SUPFAM" id="SSF102114">
    <property type="entry name" value="Radical SAM enzymes"/>
    <property type="match status" value="1"/>
</dbReference>
<dbReference type="PROSITE" id="PS51449">
    <property type="entry name" value="MTTASE_N"/>
    <property type="match status" value="1"/>
</dbReference>
<dbReference type="PROSITE" id="PS01278">
    <property type="entry name" value="MTTASE_RADICAL"/>
    <property type="match status" value="1"/>
</dbReference>
<dbReference type="PROSITE" id="PS51918">
    <property type="entry name" value="RADICAL_SAM"/>
    <property type="match status" value="1"/>
</dbReference>
<dbReference type="PROSITE" id="PS50926">
    <property type="entry name" value="TRAM"/>
    <property type="match status" value="1"/>
</dbReference>
<accession>A8G2A6</accession>
<keyword id="KW-0004">4Fe-4S</keyword>
<keyword id="KW-0963">Cytoplasm</keyword>
<keyword id="KW-0408">Iron</keyword>
<keyword id="KW-0411">Iron-sulfur</keyword>
<keyword id="KW-0479">Metal-binding</keyword>
<keyword id="KW-0949">S-adenosyl-L-methionine</keyword>
<keyword id="KW-0808">Transferase</keyword>
<reference key="1">
    <citation type="journal article" date="2007" name="PLoS Genet.">
        <title>Patterns and implications of gene gain and loss in the evolution of Prochlorococcus.</title>
        <authorList>
            <person name="Kettler G.C."/>
            <person name="Martiny A.C."/>
            <person name="Huang K."/>
            <person name="Zucker J."/>
            <person name="Coleman M.L."/>
            <person name="Rodrigue S."/>
            <person name="Chen F."/>
            <person name="Lapidus A."/>
            <person name="Ferriera S."/>
            <person name="Johnson J."/>
            <person name="Steglich C."/>
            <person name="Church G.M."/>
            <person name="Richardson P."/>
            <person name="Chisholm S.W."/>
        </authorList>
    </citation>
    <scope>NUCLEOTIDE SEQUENCE [LARGE SCALE GENOMIC DNA]</scope>
    <source>
        <strain>MIT 9215</strain>
    </source>
</reference>
<proteinExistence type="inferred from homology"/>
<sequence length="454" mass="51349">MKQNSLNVKEKKLSKVAFSHVGCEKNLVDTEHMQGLLDKEGYEVDSNINEANVVVVNTCSFIQTAREESIRKILEYTNQGKEVIVAGCMAQHFKDELIKEIPEIKGLIGTGDYQKIAKVLDRVEKGEIVNEVSKIPEFIADEEIPRFVDKNKFVAYLRIAEGCNYNCAFCIIPKLRGPQRSRTIESIVSEAKSLAKQGIQEIILISQITTNYGQDIYGKPSLAKLLNELSKVPIPWIRIHYAYPTGLTDQVIRAFKDSKNIVPYFDLPLQHSHPDVLKSMNRPWQASLNESILEKIREEIPSAVLRTSLIVGFPGEKKEHFEHLLEFLDRHKFDHVGVFIFSPEVGTAAFDLPNKVSPEVAEARKDNVISVQQNISKDKNQSYVGSKMKILVEKISDNNELIGRSYNFAPEIDGTVILSVKDKIDLKNYSGKFVEANISFADEYDLYGETLKIL</sequence>
<organism>
    <name type="scientific">Prochlorococcus marinus (strain MIT 9215)</name>
    <dbReference type="NCBI Taxonomy" id="93060"/>
    <lineage>
        <taxon>Bacteria</taxon>
        <taxon>Bacillati</taxon>
        <taxon>Cyanobacteriota</taxon>
        <taxon>Cyanophyceae</taxon>
        <taxon>Synechococcales</taxon>
        <taxon>Prochlorococcaceae</taxon>
        <taxon>Prochlorococcus</taxon>
    </lineage>
</organism>
<protein>
    <recommendedName>
        <fullName evidence="1">Ribosomal protein uS12 methylthiotransferase RimO</fullName>
        <shortName evidence="1">uS12 MTTase</shortName>
        <shortName evidence="1">uS12 methylthiotransferase</shortName>
        <ecNumber evidence="1">2.8.4.4</ecNumber>
    </recommendedName>
    <alternativeName>
        <fullName evidence="1">Ribosomal protein uS12 (aspartate-C(3))-methylthiotransferase</fullName>
    </alternativeName>
    <alternativeName>
        <fullName evidence="1">Ribosome maturation factor RimO</fullName>
    </alternativeName>
</protein>
<evidence type="ECO:0000255" key="1">
    <source>
        <dbReference type="HAMAP-Rule" id="MF_01865"/>
    </source>
</evidence>
<evidence type="ECO:0000255" key="2">
    <source>
        <dbReference type="PROSITE-ProRule" id="PRU01266"/>
    </source>
</evidence>
<name>RIMO_PROM2</name>
<comment type="function">
    <text evidence="1">Catalyzes the methylthiolation of an aspartic acid residue of ribosomal protein uS12.</text>
</comment>
<comment type="catalytic activity">
    <reaction evidence="1">
        <text>L-aspartate(89)-[ribosomal protein uS12]-hydrogen + (sulfur carrier)-SH + AH2 + 2 S-adenosyl-L-methionine = 3-methylsulfanyl-L-aspartate(89)-[ribosomal protein uS12]-hydrogen + (sulfur carrier)-H + 5'-deoxyadenosine + L-methionine + A + S-adenosyl-L-homocysteine + 2 H(+)</text>
        <dbReference type="Rhea" id="RHEA:37087"/>
        <dbReference type="Rhea" id="RHEA-COMP:10460"/>
        <dbReference type="Rhea" id="RHEA-COMP:10461"/>
        <dbReference type="Rhea" id="RHEA-COMP:14737"/>
        <dbReference type="Rhea" id="RHEA-COMP:14739"/>
        <dbReference type="ChEBI" id="CHEBI:13193"/>
        <dbReference type="ChEBI" id="CHEBI:15378"/>
        <dbReference type="ChEBI" id="CHEBI:17319"/>
        <dbReference type="ChEBI" id="CHEBI:17499"/>
        <dbReference type="ChEBI" id="CHEBI:29917"/>
        <dbReference type="ChEBI" id="CHEBI:29961"/>
        <dbReference type="ChEBI" id="CHEBI:57844"/>
        <dbReference type="ChEBI" id="CHEBI:57856"/>
        <dbReference type="ChEBI" id="CHEBI:59789"/>
        <dbReference type="ChEBI" id="CHEBI:64428"/>
        <dbReference type="ChEBI" id="CHEBI:73599"/>
        <dbReference type="EC" id="2.8.4.4"/>
    </reaction>
</comment>
<comment type="cofactor">
    <cofactor evidence="1">
        <name>[4Fe-4S] cluster</name>
        <dbReference type="ChEBI" id="CHEBI:49883"/>
    </cofactor>
    <text evidence="1">Binds 2 [4Fe-4S] clusters. One cluster is coordinated with 3 cysteines and an exchangeable S-adenosyl-L-methionine.</text>
</comment>
<comment type="subcellular location">
    <subcellularLocation>
        <location evidence="1">Cytoplasm</location>
    </subcellularLocation>
</comment>
<comment type="similarity">
    <text evidence="1">Belongs to the methylthiotransferase family. RimO subfamily.</text>
</comment>
<feature type="chain" id="PRO_0000374928" description="Ribosomal protein uS12 methylthiotransferase RimO">
    <location>
        <begin position="1"/>
        <end position="454"/>
    </location>
</feature>
<feature type="domain" description="MTTase N-terminal" evidence="1">
    <location>
        <begin position="14"/>
        <end position="125"/>
    </location>
</feature>
<feature type="domain" description="Radical SAM core" evidence="2">
    <location>
        <begin position="149"/>
        <end position="378"/>
    </location>
</feature>
<feature type="domain" description="TRAM" evidence="1">
    <location>
        <begin position="381"/>
        <end position="452"/>
    </location>
</feature>
<feature type="binding site" evidence="1">
    <location>
        <position position="23"/>
    </location>
    <ligand>
        <name>[4Fe-4S] cluster</name>
        <dbReference type="ChEBI" id="CHEBI:49883"/>
        <label>1</label>
    </ligand>
</feature>
<feature type="binding site" evidence="1">
    <location>
        <position position="59"/>
    </location>
    <ligand>
        <name>[4Fe-4S] cluster</name>
        <dbReference type="ChEBI" id="CHEBI:49883"/>
        <label>1</label>
    </ligand>
</feature>
<feature type="binding site" evidence="1">
    <location>
        <position position="88"/>
    </location>
    <ligand>
        <name>[4Fe-4S] cluster</name>
        <dbReference type="ChEBI" id="CHEBI:49883"/>
        <label>1</label>
    </ligand>
</feature>
<feature type="binding site" evidence="1">
    <location>
        <position position="163"/>
    </location>
    <ligand>
        <name>[4Fe-4S] cluster</name>
        <dbReference type="ChEBI" id="CHEBI:49883"/>
        <label>2</label>
        <note>4Fe-4S-S-AdoMet</note>
    </ligand>
</feature>
<feature type="binding site" evidence="1">
    <location>
        <position position="167"/>
    </location>
    <ligand>
        <name>[4Fe-4S] cluster</name>
        <dbReference type="ChEBI" id="CHEBI:49883"/>
        <label>2</label>
        <note>4Fe-4S-S-AdoMet</note>
    </ligand>
</feature>
<feature type="binding site" evidence="1">
    <location>
        <position position="170"/>
    </location>
    <ligand>
        <name>[4Fe-4S] cluster</name>
        <dbReference type="ChEBI" id="CHEBI:49883"/>
        <label>2</label>
        <note>4Fe-4S-S-AdoMet</note>
    </ligand>
</feature>